<sequence length="525" mass="59068">MTKDAEVEEFLKRVEDLDGKINKPPIVKKKPQHLSTTPIENDDTLDGNLVYKSAFNYEKSFGSKKPVGVIGLDKEDDRKFLVSEEDYKLLQKIKMEQQQQHLSERHHRHIEPVRHIIPDRHSKPIFHNEPVIVREESEDEAPPLPSRNRASSENVVKSTTSAPPLLPRRRYKDDITAKKLDVVSDNVNSSNKIKEMSSISDKNKSKPPLPEKKTFLKSLEDNKLTTSNYKDQDKGPELKPTRNVDFLESVQLKSPPQSPSKMKTIEEKHFKLNSPKKDGFIVSVLSSEENSRSSLSEKPSNEGNYHLSGGLTTKAEKKKPVVPPKKDIKLKDIELEKVDKTGKGGDGKQIEPEFQKIVLNKRTPPPVSKRKPSIPEALLKAQNLSKNTENKKSVAQSKESIDMLPKLNKKGPPVPQRKVSMPEALKKLESMKNKNSTTENVQKDNGEESEISDSEPESINNKLESVLKRANTSGQIGSKHIGHLPPRAATTGDLLSKKEPHTTQSLSHPNKSRSRGPKRKLPTKI</sequence>
<keyword id="KW-1003">Cell membrane</keyword>
<keyword id="KW-0963">Cytoplasm</keyword>
<keyword id="KW-0206">Cytoskeleton</keyword>
<keyword id="KW-0254">Endocytosis</keyword>
<keyword id="KW-0472">Membrane</keyword>
<keyword id="KW-1185">Reference proteome</keyword>
<reference key="1">
    <citation type="journal article" date="2004" name="Nature">
        <title>Genome evolution in yeasts.</title>
        <authorList>
            <person name="Dujon B."/>
            <person name="Sherman D."/>
            <person name="Fischer G."/>
            <person name="Durrens P."/>
            <person name="Casaregola S."/>
            <person name="Lafontaine I."/>
            <person name="de Montigny J."/>
            <person name="Marck C."/>
            <person name="Neuveglise C."/>
            <person name="Talla E."/>
            <person name="Goffard N."/>
            <person name="Frangeul L."/>
            <person name="Aigle M."/>
            <person name="Anthouard V."/>
            <person name="Babour A."/>
            <person name="Barbe V."/>
            <person name="Barnay S."/>
            <person name="Blanchin S."/>
            <person name="Beckerich J.-M."/>
            <person name="Beyne E."/>
            <person name="Bleykasten C."/>
            <person name="Boisrame A."/>
            <person name="Boyer J."/>
            <person name="Cattolico L."/>
            <person name="Confanioleri F."/>
            <person name="de Daruvar A."/>
            <person name="Despons L."/>
            <person name="Fabre E."/>
            <person name="Fairhead C."/>
            <person name="Ferry-Dumazet H."/>
            <person name="Groppi A."/>
            <person name="Hantraye F."/>
            <person name="Hennequin C."/>
            <person name="Jauniaux N."/>
            <person name="Joyet P."/>
            <person name="Kachouri R."/>
            <person name="Kerrest A."/>
            <person name="Koszul R."/>
            <person name="Lemaire M."/>
            <person name="Lesur I."/>
            <person name="Ma L."/>
            <person name="Muller H."/>
            <person name="Nicaud J.-M."/>
            <person name="Nikolski M."/>
            <person name="Oztas S."/>
            <person name="Ozier-Kalogeropoulos O."/>
            <person name="Pellenz S."/>
            <person name="Potier S."/>
            <person name="Richard G.-F."/>
            <person name="Straub M.-L."/>
            <person name="Suleau A."/>
            <person name="Swennen D."/>
            <person name="Tekaia F."/>
            <person name="Wesolowski-Louvel M."/>
            <person name="Westhof E."/>
            <person name="Wirth B."/>
            <person name="Zeniou-Meyer M."/>
            <person name="Zivanovic Y."/>
            <person name="Bolotin-Fukuhara M."/>
            <person name="Thierry A."/>
            <person name="Bouchier C."/>
            <person name="Caudron B."/>
            <person name="Scarpelli C."/>
            <person name="Gaillardin C."/>
            <person name="Weissenbach J."/>
            <person name="Wincker P."/>
            <person name="Souciet J.-L."/>
        </authorList>
    </citation>
    <scope>NUCLEOTIDE SEQUENCE [LARGE SCALE GENOMIC DNA]</scope>
    <source>
        <strain>ATCC 2001 / BCRC 20586 / JCM 3761 / NBRC 0622 / NRRL Y-65 / CBS 138</strain>
    </source>
</reference>
<name>BSP1_CANGA</name>
<gene>
    <name type="primary">BSP1</name>
    <name type="ordered locus">CAGL0I06446g</name>
</gene>
<feature type="chain" id="PRO_0000228136" description="Protein BSP1">
    <location>
        <begin position="1"/>
        <end position="525"/>
    </location>
</feature>
<feature type="region of interest" description="Disordered" evidence="2">
    <location>
        <begin position="21"/>
        <end position="40"/>
    </location>
</feature>
<feature type="region of interest" description="Disordered" evidence="2">
    <location>
        <begin position="98"/>
        <end position="262"/>
    </location>
</feature>
<feature type="region of interest" description="Disordered" evidence="2">
    <location>
        <begin position="285"/>
        <end position="325"/>
    </location>
</feature>
<feature type="region of interest" description="Disordered" evidence="2">
    <location>
        <begin position="339"/>
        <end position="525"/>
    </location>
</feature>
<feature type="compositionally biased region" description="Basic and acidic residues" evidence="2">
    <location>
        <begin position="110"/>
        <end position="122"/>
    </location>
</feature>
<feature type="compositionally biased region" description="Polar residues" evidence="2">
    <location>
        <begin position="148"/>
        <end position="162"/>
    </location>
</feature>
<feature type="compositionally biased region" description="Basic and acidic residues" evidence="2">
    <location>
        <begin position="171"/>
        <end position="182"/>
    </location>
</feature>
<feature type="compositionally biased region" description="Basic and acidic residues" evidence="2">
    <location>
        <begin position="201"/>
        <end position="223"/>
    </location>
</feature>
<feature type="compositionally biased region" description="Basic and acidic residues" evidence="2">
    <location>
        <begin position="230"/>
        <end position="242"/>
    </location>
</feature>
<feature type="compositionally biased region" description="Polar residues" evidence="2">
    <location>
        <begin position="251"/>
        <end position="261"/>
    </location>
</feature>
<feature type="compositionally biased region" description="Low complexity" evidence="2">
    <location>
        <begin position="285"/>
        <end position="297"/>
    </location>
</feature>
<feature type="compositionally biased region" description="Basic and acidic residues" evidence="2">
    <location>
        <begin position="314"/>
        <end position="325"/>
    </location>
</feature>
<feature type="compositionally biased region" description="Basic and acidic residues" evidence="2">
    <location>
        <begin position="339"/>
        <end position="354"/>
    </location>
</feature>
<feature type="compositionally biased region" description="Polar residues" evidence="2">
    <location>
        <begin position="382"/>
        <end position="398"/>
    </location>
</feature>
<feature type="compositionally biased region" description="Acidic residues" evidence="2">
    <location>
        <begin position="447"/>
        <end position="456"/>
    </location>
</feature>
<feature type="compositionally biased region" description="Basic residues" evidence="2">
    <location>
        <begin position="510"/>
        <end position="525"/>
    </location>
</feature>
<protein>
    <recommendedName>
        <fullName>Protein BSP1</fullName>
    </recommendedName>
</protein>
<comment type="function">
    <text evidence="1">Cortical patch protein involved in endocytosis.</text>
</comment>
<comment type="subcellular location">
    <subcellularLocation>
        <location evidence="1">Cell membrane</location>
        <topology evidence="1">Peripheral membrane protein</topology>
    </subcellularLocation>
    <subcellularLocation>
        <location>Cytoplasm</location>
        <location>Cytoskeleton</location>
        <location>Actin patch</location>
    </subcellularLocation>
</comment>
<evidence type="ECO:0000250" key="1"/>
<evidence type="ECO:0000256" key="2">
    <source>
        <dbReference type="SAM" id="MobiDB-lite"/>
    </source>
</evidence>
<accession>Q6FQG3</accession>
<dbReference type="EMBL" id="CR380955">
    <property type="protein sequence ID" value="CAG60468.1"/>
    <property type="molecule type" value="Genomic_DNA"/>
</dbReference>
<dbReference type="RefSeq" id="XP_447531.1">
    <property type="nucleotide sequence ID" value="XM_447531.1"/>
</dbReference>
<dbReference type="SMR" id="Q6FQG3"/>
<dbReference type="FunCoup" id="Q6FQG3">
    <property type="interactions" value="72"/>
</dbReference>
<dbReference type="STRING" id="284593.Q6FQG3"/>
<dbReference type="EnsemblFungi" id="CAGL0I06446g-T">
    <property type="protein sequence ID" value="CAGL0I06446g-T-p1"/>
    <property type="gene ID" value="CAGL0I06446g"/>
</dbReference>
<dbReference type="KEGG" id="cgr:2889129"/>
<dbReference type="CGD" id="CAL0132052">
    <property type="gene designation" value="CAGL0I06446g"/>
</dbReference>
<dbReference type="VEuPathDB" id="FungiDB:CAGL0I06446g"/>
<dbReference type="eggNOG" id="ENOG502S4ZF">
    <property type="taxonomic scope" value="Eukaryota"/>
</dbReference>
<dbReference type="HOGENOM" id="CLU_518734_0_0_1"/>
<dbReference type="InParanoid" id="Q6FQG3"/>
<dbReference type="OMA" id="SAYNYEM"/>
<dbReference type="Proteomes" id="UP000002428">
    <property type="component" value="Chromosome I"/>
</dbReference>
<dbReference type="GO" id="GO:0030479">
    <property type="term" value="C:actin cortical patch"/>
    <property type="evidence" value="ECO:0007669"/>
    <property type="project" value="UniProtKB-SubCell"/>
</dbReference>
<dbReference type="GO" id="GO:0005886">
    <property type="term" value="C:plasma membrane"/>
    <property type="evidence" value="ECO:0007669"/>
    <property type="project" value="UniProtKB-SubCell"/>
</dbReference>
<dbReference type="GO" id="GO:0006897">
    <property type="term" value="P:endocytosis"/>
    <property type="evidence" value="ECO:0007669"/>
    <property type="project" value="UniProtKB-KW"/>
</dbReference>
<proteinExistence type="inferred from homology"/>
<organism>
    <name type="scientific">Candida glabrata (strain ATCC 2001 / BCRC 20586 / JCM 3761 / NBRC 0622 / NRRL Y-65 / CBS 138)</name>
    <name type="common">Yeast</name>
    <name type="synonym">Nakaseomyces glabratus</name>
    <dbReference type="NCBI Taxonomy" id="284593"/>
    <lineage>
        <taxon>Eukaryota</taxon>
        <taxon>Fungi</taxon>
        <taxon>Dikarya</taxon>
        <taxon>Ascomycota</taxon>
        <taxon>Saccharomycotina</taxon>
        <taxon>Saccharomycetes</taxon>
        <taxon>Saccharomycetales</taxon>
        <taxon>Saccharomycetaceae</taxon>
        <taxon>Nakaseomyces</taxon>
    </lineage>
</organism>